<proteinExistence type="inferred from homology"/>
<reference key="1">
    <citation type="submission" date="2007-03" db="EMBL/GenBank/DDBJ databases">
        <title>Complete sequence of Desulfotomaculum reducens MI-1.</title>
        <authorList>
            <consortium name="US DOE Joint Genome Institute"/>
            <person name="Copeland A."/>
            <person name="Lucas S."/>
            <person name="Lapidus A."/>
            <person name="Barry K."/>
            <person name="Detter J.C."/>
            <person name="Glavina del Rio T."/>
            <person name="Hammon N."/>
            <person name="Israni S."/>
            <person name="Dalin E."/>
            <person name="Tice H."/>
            <person name="Pitluck S."/>
            <person name="Sims D."/>
            <person name="Brettin T."/>
            <person name="Bruce D."/>
            <person name="Han C."/>
            <person name="Tapia R."/>
            <person name="Schmutz J."/>
            <person name="Larimer F."/>
            <person name="Land M."/>
            <person name="Hauser L."/>
            <person name="Kyrpides N."/>
            <person name="Kim E."/>
            <person name="Tebo B.M."/>
            <person name="Richardson P."/>
        </authorList>
    </citation>
    <scope>NUCLEOTIDE SEQUENCE [LARGE SCALE GENOMIC DNA]</scope>
    <source>
        <strain>ATCC BAA-1160 / DSM 100696 / MI-1</strain>
    </source>
</reference>
<dbReference type="EMBL" id="CP000612">
    <property type="protein sequence ID" value="ABO48764.1"/>
    <property type="molecule type" value="Genomic_DNA"/>
</dbReference>
<dbReference type="RefSeq" id="WP_011876604.1">
    <property type="nucleotide sequence ID" value="NC_009253.1"/>
</dbReference>
<dbReference type="SMR" id="A4J111"/>
<dbReference type="STRING" id="349161.Dred_0215"/>
<dbReference type="KEGG" id="drm:Dred_0215"/>
<dbReference type="eggNOG" id="COG0087">
    <property type="taxonomic scope" value="Bacteria"/>
</dbReference>
<dbReference type="HOGENOM" id="CLU_044142_4_1_9"/>
<dbReference type="OrthoDB" id="9806135at2"/>
<dbReference type="Proteomes" id="UP000001556">
    <property type="component" value="Chromosome"/>
</dbReference>
<dbReference type="GO" id="GO:0022625">
    <property type="term" value="C:cytosolic large ribosomal subunit"/>
    <property type="evidence" value="ECO:0007669"/>
    <property type="project" value="TreeGrafter"/>
</dbReference>
<dbReference type="GO" id="GO:0019843">
    <property type="term" value="F:rRNA binding"/>
    <property type="evidence" value="ECO:0007669"/>
    <property type="project" value="UniProtKB-UniRule"/>
</dbReference>
<dbReference type="GO" id="GO:0003735">
    <property type="term" value="F:structural constituent of ribosome"/>
    <property type="evidence" value="ECO:0007669"/>
    <property type="project" value="InterPro"/>
</dbReference>
<dbReference type="GO" id="GO:0006412">
    <property type="term" value="P:translation"/>
    <property type="evidence" value="ECO:0007669"/>
    <property type="project" value="UniProtKB-UniRule"/>
</dbReference>
<dbReference type="FunFam" id="2.40.30.10:FF:000004">
    <property type="entry name" value="50S ribosomal protein L3"/>
    <property type="match status" value="1"/>
</dbReference>
<dbReference type="FunFam" id="3.30.160.810:FF:000001">
    <property type="entry name" value="50S ribosomal protein L3"/>
    <property type="match status" value="1"/>
</dbReference>
<dbReference type="Gene3D" id="3.30.160.810">
    <property type="match status" value="1"/>
</dbReference>
<dbReference type="Gene3D" id="2.40.30.10">
    <property type="entry name" value="Translation factors"/>
    <property type="match status" value="1"/>
</dbReference>
<dbReference type="HAMAP" id="MF_01325_B">
    <property type="entry name" value="Ribosomal_uL3_B"/>
    <property type="match status" value="1"/>
</dbReference>
<dbReference type="InterPro" id="IPR000597">
    <property type="entry name" value="Ribosomal_uL3"/>
</dbReference>
<dbReference type="InterPro" id="IPR019927">
    <property type="entry name" value="Ribosomal_uL3_bac/org-type"/>
</dbReference>
<dbReference type="InterPro" id="IPR019926">
    <property type="entry name" value="Ribosomal_uL3_CS"/>
</dbReference>
<dbReference type="InterPro" id="IPR009000">
    <property type="entry name" value="Transl_B-barrel_sf"/>
</dbReference>
<dbReference type="NCBIfam" id="TIGR03625">
    <property type="entry name" value="L3_bact"/>
    <property type="match status" value="1"/>
</dbReference>
<dbReference type="PANTHER" id="PTHR11229">
    <property type="entry name" value="50S RIBOSOMAL PROTEIN L3"/>
    <property type="match status" value="1"/>
</dbReference>
<dbReference type="PANTHER" id="PTHR11229:SF16">
    <property type="entry name" value="LARGE RIBOSOMAL SUBUNIT PROTEIN UL3C"/>
    <property type="match status" value="1"/>
</dbReference>
<dbReference type="Pfam" id="PF00297">
    <property type="entry name" value="Ribosomal_L3"/>
    <property type="match status" value="1"/>
</dbReference>
<dbReference type="SUPFAM" id="SSF50447">
    <property type="entry name" value="Translation proteins"/>
    <property type="match status" value="1"/>
</dbReference>
<dbReference type="PROSITE" id="PS00474">
    <property type="entry name" value="RIBOSOMAL_L3"/>
    <property type="match status" value="1"/>
</dbReference>
<comment type="function">
    <text evidence="1">One of the primary rRNA binding proteins, it binds directly near the 3'-end of the 23S rRNA, where it nucleates assembly of the 50S subunit.</text>
</comment>
<comment type="subunit">
    <text evidence="1">Part of the 50S ribosomal subunit. Forms a cluster with proteins L14 and L19.</text>
</comment>
<comment type="similarity">
    <text evidence="1">Belongs to the universal ribosomal protein uL3 family.</text>
</comment>
<protein>
    <recommendedName>
        <fullName evidence="1">Large ribosomal subunit protein uL3</fullName>
    </recommendedName>
    <alternativeName>
        <fullName evidence="3">50S ribosomal protein L3</fullName>
    </alternativeName>
</protein>
<sequence length="209" mass="22538">MPKGILGKKIGMTQIFNEAGVAIPVTVVEAGPCLVVQKRTPENDGYSAIQLGFGVKRENLLNKPTKGHLNKAGVRPVRFLRELKVDDLEAFQVGQEIKADIFAEGEKVDVVGTSKGKGFAGGIKRHNFHRGPMAHGSKYHRRPGSSAAKGPARTFKGRKLPGHYGVERVTVQNLQVVKVDPERNLLAIKGAVPGPRGGLLLVKNSVKVK</sequence>
<evidence type="ECO:0000255" key="1">
    <source>
        <dbReference type="HAMAP-Rule" id="MF_01325"/>
    </source>
</evidence>
<evidence type="ECO:0000256" key="2">
    <source>
        <dbReference type="SAM" id="MobiDB-lite"/>
    </source>
</evidence>
<evidence type="ECO:0000305" key="3"/>
<accession>A4J111</accession>
<gene>
    <name evidence="1" type="primary">rplC</name>
    <name type="ordered locus">Dred_0215</name>
</gene>
<organism>
    <name type="scientific">Desulforamulus reducens (strain ATCC BAA-1160 / DSM 100696 / MI-1)</name>
    <name type="common">Desulfotomaculum reducens</name>
    <dbReference type="NCBI Taxonomy" id="349161"/>
    <lineage>
        <taxon>Bacteria</taxon>
        <taxon>Bacillati</taxon>
        <taxon>Bacillota</taxon>
        <taxon>Clostridia</taxon>
        <taxon>Eubacteriales</taxon>
        <taxon>Peptococcaceae</taxon>
        <taxon>Desulforamulus</taxon>
    </lineage>
</organism>
<name>RL3_DESRM</name>
<keyword id="KW-1185">Reference proteome</keyword>
<keyword id="KW-0687">Ribonucleoprotein</keyword>
<keyword id="KW-0689">Ribosomal protein</keyword>
<keyword id="KW-0694">RNA-binding</keyword>
<keyword id="KW-0699">rRNA-binding</keyword>
<feature type="chain" id="PRO_1000073249" description="Large ribosomal subunit protein uL3">
    <location>
        <begin position="1"/>
        <end position="209"/>
    </location>
</feature>
<feature type="region of interest" description="Disordered" evidence="2">
    <location>
        <begin position="121"/>
        <end position="154"/>
    </location>
</feature>